<gene>
    <name type="primary">cyp517A2</name>
    <name type="ORF">DDB_G0284647</name>
</gene>
<comment type="cofactor">
    <cofactor evidence="1">
        <name>heme</name>
        <dbReference type="ChEBI" id="CHEBI:30413"/>
    </cofactor>
</comment>
<comment type="subcellular location">
    <subcellularLocation>
        <location evidence="3">Membrane</location>
        <topology evidence="3">Single-pass membrane protein</topology>
    </subcellularLocation>
</comment>
<comment type="similarity">
    <text evidence="3">Belongs to the cytochrome P450 family.</text>
</comment>
<protein>
    <recommendedName>
        <fullName>Probable cytochrome P450 517A2</fullName>
        <ecNumber>1.14.-.-</ecNumber>
    </recommendedName>
</protein>
<feature type="chain" id="PRO_0000318828" description="Probable cytochrome P450 517A2">
    <location>
        <begin position="1"/>
        <end position="510"/>
    </location>
</feature>
<feature type="transmembrane region" description="Helical" evidence="2">
    <location>
        <begin position="1"/>
        <end position="21"/>
    </location>
</feature>
<feature type="binding site" description="axial binding residue" evidence="1">
    <location>
        <position position="450"/>
    </location>
    <ligand>
        <name>heme</name>
        <dbReference type="ChEBI" id="CHEBI:30413"/>
    </ligand>
    <ligandPart>
        <name>Fe</name>
        <dbReference type="ChEBI" id="CHEBI:18248"/>
    </ligandPart>
</feature>
<organism>
    <name type="scientific">Dictyostelium discoideum</name>
    <name type="common">Social amoeba</name>
    <dbReference type="NCBI Taxonomy" id="44689"/>
    <lineage>
        <taxon>Eukaryota</taxon>
        <taxon>Amoebozoa</taxon>
        <taxon>Evosea</taxon>
        <taxon>Eumycetozoa</taxon>
        <taxon>Dictyostelia</taxon>
        <taxon>Dictyosteliales</taxon>
        <taxon>Dictyosteliaceae</taxon>
        <taxon>Dictyostelium</taxon>
    </lineage>
</organism>
<reference key="1">
    <citation type="journal article" date="2005" name="Nature">
        <title>The genome of the social amoeba Dictyostelium discoideum.</title>
        <authorList>
            <person name="Eichinger L."/>
            <person name="Pachebat J.A."/>
            <person name="Gloeckner G."/>
            <person name="Rajandream M.A."/>
            <person name="Sucgang R."/>
            <person name="Berriman M."/>
            <person name="Song J."/>
            <person name="Olsen R."/>
            <person name="Szafranski K."/>
            <person name="Xu Q."/>
            <person name="Tunggal B."/>
            <person name="Kummerfeld S."/>
            <person name="Madera M."/>
            <person name="Konfortov B.A."/>
            <person name="Rivero F."/>
            <person name="Bankier A.T."/>
            <person name="Lehmann R."/>
            <person name="Hamlin N."/>
            <person name="Davies R."/>
            <person name="Gaudet P."/>
            <person name="Fey P."/>
            <person name="Pilcher K."/>
            <person name="Chen G."/>
            <person name="Saunders D."/>
            <person name="Sodergren E.J."/>
            <person name="Davis P."/>
            <person name="Kerhornou A."/>
            <person name="Nie X."/>
            <person name="Hall N."/>
            <person name="Anjard C."/>
            <person name="Hemphill L."/>
            <person name="Bason N."/>
            <person name="Farbrother P."/>
            <person name="Desany B."/>
            <person name="Just E."/>
            <person name="Morio T."/>
            <person name="Rost R."/>
            <person name="Churcher C.M."/>
            <person name="Cooper J."/>
            <person name="Haydock S."/>
            <person name="van Driessche N."/>
            <person name="Cronin A."/>
            <person name="Goodhead I."/>
            <person name="Muzny D.M."/>
            <person name="Mourier T."/>
            <person name="Pain A."/>
            <person name="Lu M."/>
            <person name="Harper D."/>
            <person name="Lindsay R."/>
            <person name="Hauser H."/>
            <person name="James K.D."/>
            <person name="Quiles M."/>
            <person name="Madan Babu M."/>
            <person name="Saito T."/>
            <person name="Buchrieser C."/>
            <person name="Wardroper A."/>
            <person name="Felder M."/>
            <person name="Thangavelu M."/>
            <person name="Johnson D."/>
            <person name="Knights A."/>
            <person name="Loulseged H."/>
            <person name="Mungall K.L."/>
            <person name="Oliver K."/>
            <person name="Price C."/>
            <person name="Quail M.A."/>
            <person name="Urushihara H."/>
            <person name="Hernandez J."/>
            <person name="Rabbinowitsch E."/>
            <person name="Steffen D."/>
            <person name="Sanders M."/>
            <person name="Ma J."/>
            <person name="Kohara Y."/>
            <person name="Sharp S."/>
            <person name="Simmonds M.N."/>
            <person name="Spiegler S."/>
            <person name="Tivey A."/>
            <person name="Sugano S."/>
            <person name="White B."/>
            <person name="Walker D."/>
            <person name="Woodward J.R."/>
            <person name="Winckler T."/>
            <person name="Tanaka Y."/>
            <person name="Shaulsky G."/>
            <person name="Schleicher M."/>
            <person name="Weinstock G.M."/>
            <person name="Rosenthal A."/>
            <person name="Cox E.C."/>
            <person name="Chisholm R.L."/>
            <person name="Gibbs R.A."/>
            <person name="Loomis W.F."/>
            <person name="Platzer M."/>
            <person name="Kay R.R."/>
            <person name="Williams J.G."/>
            <person name="Dear P.H."/>
            <person name="Noegel A.A."/>
            <person name="Barrell B.G."/>
            <person name="Kuspa A."/>
        </authorList>
    </citation>
    <scope>NUCLEOTIDE SEQUENCE [LARGE SCALE GENOMIC DNA]</scope>
    <source>
        <strain>AX4</strain>
    </source>
</reference>
<name>C5172_DICDI</name>
<sequence>MRILIIIILIIIVFLVKDTIKKNKKVNSKSPCGPFAFPILGNIIQYFFYQILNIKEHSMIERYSRKYDGITRIWFGDIFILYVSNYEIVKCFQKEENFFDRPSTFVPTWRYMSSNGGGIMSSNDEKWKRAKTTFLKSLKIHGKKYLIEKKSIEFVNSIEKFSNSNQVFYPKQYSQGFTSSIFFKYMFNEDISIDNKFLKEIGTAVGMVFTKNSHLTVFDCFGILSPFYDLFFKFRLRPIEILKKTIDKQLTNHLNSMDSKMGDHQSRDIMDDLLIEYGSLNEISNQDRIQINQICFDVMSTDIGTVATTIDWVLLQLCNRQDLQEIICNEIQDTIKIKRNNVINDGGGGADTDNLFINLCDKQSIPYLIAFIKETMRVFSNGWSLPKTSKHDQICANYFIPKGSILFINYFSIHLNEEFFKNPREFNPARYLDDSIPIPDLHFGIGQRGCPGRFVAMDQVFLCIANTLLKYKIKSIDGKKIDDTIQFSVYLKPKDFGILLEKRNKLFVND</sequence>
<dbReference type="EC" id="1.14.-.-"/>
<dbReference type="EMBL" id="AAFI02000070">
    <property type="protein sequence ID" value="EAS66858.1"/>
    <property type="molecule type" value="Genomic_DNA"/>
</dbReference>
<dbReference type="RefSeq" id="XP_001134541.1">
    <property type="nucleotide sequence ID" value="XM_001134541.1"/>
</dbReference>
<dbReference type="SMR" id="Q1ZXF3"/>
<dbReference type="FunCoup" id="Q1ZXF3">
    <property type="interactions" value="1"/>
</dbReference>
<dbReference type="STRING" id="44689.Q1ZXF3"/>
<dbReference type="PaxDb" id="44689-DDB0232998"/>
<dbReference type="EnsemblProtists" id="EAS66858">
    <property type="protein sequence ID" value="EAS66858"/>
    <property type="gene ID" value="DDB_G0284647"/>
</dbReference>
<dbReference type="GeneID" id="8624702"/>
<dbReference type="KEGG" id="ddi:DDB_G0284647"/>
<dbReference type="dictyBase" id="DDB_G0284647">
    <property type="gene designation" value="cyp517A2"/>
</dbReference>
<dbReference type="VEuPathDB" id="AmoebaDB:DDB_G0284647"/>
<dbReference type="eggNOG" id="KOG0156">
    <property type="taxonomic scope" value="Eukaryota"/>
</dbReference>
<dbReference type="HOGENOM" id="CLU_001570_22_0_1"/>
<dbReference type="InParanoid" id="Q1ZXF3"/>
<dbReference type="OMA" id="ICANYFI"/>
<dbReference type="PhylomeDB" id="Q1ZXF3"/>
<dbReference type="Reactome" id="R-DDI-211935">
    <property type="pathway name" value="Fatty acids"/>
</dbReference>
<dbReference type="Reactome" id="R-DDI-211945">
    <property type="pathway name" value="Phase I - Functionalization of compounds"/>
</dbReference>
<dbReference type="Reactome" id="R-DDI-211958">
    <property type="pathway name" value="Miscellaneous substrates"/>
</dbReference>
<dbReference type="Reactome" id="R-DDI-211981">
    <property type="pathway name" value="Xenobiotics"/>
</dbReference>
<dbReference type="Reactome" id="R-DDI-211999">
    <property type="pathway name" value="CYP2E1 reactions"/>
</dbReference>
<dbReference type="Reactome" id="R-DDI-2142670">
    <property type="pathway name" value="Synthesis of epoxy (EET) and dihydroxyeicosatrienoic acids (DHET)"/>
</dbReference>
<dbReference type="Reactome" id="R-DDI-2142816">
    <property type="pathway name" value="Synthesis of (16-20)-hydroxyeicosatetraenoic acids (HETE)"/>
</dbReference>
<dbReference type="Reactome" id="R-DDI-5423646">
    <property type="pathway name" value="Aflatoxin activation and detoxification"/>
</dbReference>
<dbReference type="Reactome" id="R-DDI-9027307">
    <property type="pathway name" value="Biosynthesis of maresin-like SPMs"/>
</dbReference>
<dbReference type="Reactome" id="R-DDI-9749641">
    <property type="pathway name" value="Aspirin ADME"/>
</dbReference>
<dbReference type="Reactome" id="R-DDI-9753281">
    <property type="pathway name" value="Paracetamol ADME"/>
</dbReference>
<dbReference type="PRO" id="PR:Q1ZXF3"/>
<dbReference type="Proteomes" id="UP000002195">
    <property type="component" value="Chromosome 4"/>
</dbReference>
<dbReference type="GO" id="GO:0016020">
    <property type="term" value="C:membrane"/>
    <property type="evidence" value="ECO:0007669"/>
    <property type="project" value="UniProtKB-SubCell"/>
</dbReference>
<dbReference type="GO" id="GO:0020037">
    <property type="term" value="F:heme binding"/>
    <property type="evidence" value="ECO:0007669"/>
    <property type="project" value="InterPro"/>
</dbReference>
<dbReference type="GO" id="GO:0005506">
    <property type="term" value="F:iron ion binding"/>
    <property type="evidence" value="ECO:0007669"/>
    <property type="project" value="InterPro"/>
</dbReference>
<dbReference type="GO" id="GO:0004497">
    <property type="term" value="F:monooxygenase activity"/>
    <property type="evidence" value="ECO:0007669"/>
    <property type="project" value="UniProtKB-KW"/>
</dbReference>
<dbReference type="GO" id="GO:0016705">
    <property type="term" value="F:oxidoreductase activity, acting on paired donors, with incorporation or reduction of molecular oxygen"/>
    <property type="evidence" value="ECO:0007669"/>
    <property type="project" value="InterPro"/>
</dbReference>
<dbReference type="CDD" id="cd20617">
    <property type="entry name" value="CYP1_2-like"/>
    <property type="match status" value="1"/>
</dbReference>
<dbReference type="FunFam" id="1.10.630.10:FF:000078">
    <property type="entry name" value="Probable cytochrome P450 515A1"/>
    <property type="match status" value="1"/>
</dbReference>
<dbReference type="Gene3D" id="1.10.630.10">
    <property type="entry name" value="Cytochrome P450"/>
    <property type="match status" value="1"/>
</dbReference>
<dbReference type="InterPro" id="IPR001128">
    <property type="entry name" value="Cyt_P450"/>
</dbReference>
<dbReference type="InterPro" id="IPR017972">
    <property type="entry name" value="Cyt_P450_CS"/>
</dbReference>
<dbReference type="InterPro" id="IPR002401">
    <property type="entry name" value="Cyt_P450_E_grp-I"/>
</dbReference>
<dbReference type="InterPro" id="IPR036396">
    <property type="entry name" value="Cyt_P450_sf"/>
</dbReference>
<dbReference type="PANTHER" id="PTHR24303:SF31">
    <property type="entry name" value="CYTOCHROME P450 307A1-RELATED"/>
    <property type="match status" value="1"/>
</dbReference>
<dbReference type="PANTHER" id="PTHR24303">
    <property type="entry name" value="HEME-BINDING MONOOXYGENASE FAMILY"/>
    <property type="match status" value="1"/>
</dbReference>
<dbReference type="Pfam" id="PF00067">
    <property type="entry name" value="p450"/>
    <property type="match status" value="1"/>
</dbReference>
<dbReference type="PRINTS" id="PR00463">
    <property type="entry name" value="EP450I"/>
</dbReference>
<dbReference type="PRINTS" id="PR00385">
    <property type="entry name" value="P450"/>
</dbReference>
<dbReference type="SUPFAM" id="SSF48264">
    <property type="entry name" value="Cytochrome P450"/>
    <property type="match status" value="1"/>
</dbReference>
<dbReference type="PROSITE" id="PS00086">
    <property type="entry name" value="CYTOCHROME_P450"/>
    <property type="match status" value="1"/>
</dbReference>
<evidence type="ECO:0000250" key="1"/>
<evidence type="ECO:0000255" key="2"/>
<evidence type="ECO:0000305" key="3"/>
<proteinExistence type="inferred from homology"/>
<keyword id="KW-0349">Heme</keyword>
<keyword id="KW-0408">Iron</keyword>
<keyword id="KW-0472">Membrane</keyword>
<keyword id="KW-0479">Metal-binding</keyword>
<keyword id="KW-0503">Monooxygenase</keyword>
<keyword id="KW-0560">Oxidoreductase</keyword>
<keyword id="KW-1185">Reference proteome</keyword>
<keyword id="KW-0812">Transmembrane</keyword>
<keyword id="KW-1133">Transmembrane helix</keyword>
<accession>Q1ZXF3</accession>